<dbReference type="EMBL" id="FJ959158">
    <property type="protein sequence ID" value="ADB93128.1"/>
    <property type="molecule type" value="Genomic_DNA"/>
</dbReference>
<dbReference type="SMR" id="D6C4L6"/>
<dbReference type="ConoServer" id="4042">
    <property type="toxin name" value="Cal6.8 precursor"/>
</dbReference>
<dbReference type="GO" id="GO:0005576">
    <property type="term" value="C:extracellular region"/>
    <property type="evidence" value="ECO:0007669"/>
    <property type="project" value="UniProtKB-SubCell"/>
</dbReference>
<dbReference type="GO" id="GO:0008200">
    <property type="term" value="F:ion channel inhibitor activity"/>
    <property type="evidence" value="ECO:0007669"/>
    <property type="project" value="InterPro"/>
</dbReference>
<dbReference type="GO" id="GO:0090729">
    <property type="term" value="F:toxin activity"/>
    <property type="evidence" value="ECO:0007669"/>
    <property type="project" value="UniProtKB-KW"/>
</dbReference>
<dbReference type="InterPro" id="IPR004214">
    <property type="entry name" value="Conotoxin"/>
</dbReference>
<dbReference type="Pfam" id="PF02950">
    <property type="entry name" value="Conotoxin"/>
    <property type="match status" value="1"/>
</dbReference>
<organism>
    <name type="scientific">Californiconus californicus</name>
    <name type="common">California cone</name>
    <name type="synonym">Conus californicus</name>
    <dbReference type="NCBI Taxonomy" id="1736779"/>
    <lineage>
        <taxon>Eukaryota</taxon>
        <taxon>Metazoa</taxon>
        <taxon>Spiralia</taxon>
        <taxon>Lophotrochozoa</taxon>
        <taxon>Mollusca</taxon>
        <taxon>Gastropoda</taxon>
        <taxon>Caenogastropoda</taxon>
        <taxon>Neogastropoda</taxon>
        <taxon>Conoidea</taxon>
        <taxon>Conidae</taxon>
        <taxon>Californiconus</taxon>
    </lineage>
</organism>
<protein>
    <recommendedName>
        <fullName>Conotoxin Cl6.8</fullName>
    </recommendedName>
</protein>
<accession>D6C4L6</accession>
<proteinExistence type="inferred from homology"/>
<reference key="1">
    <citation type="journal article" date="2010" name="Mol. Phylogenet. Evol.">
        <title>Evolution of Conus peptide toxins: analysis of Conus californicus Reeve, 1844.</title>
        <authorList>
            <person name="Biggs J.S."/>
            <person name="Watkins M."/>
            <person name="Puillandre N."/>
            <person name="Ownby J.P."/>
            <person name="Lopez-Vera E."/>
            <person name="Christensen S."/>
            <person name="Moreno K.J."/>
            <person name="Bernaldez J."/>
            <person name="Licea-Navarro A."/>
            <person name="Corneli P.S."/>
            <person name="Olivera B.M."/>
        </authorList>
    </citation>
    <scope>NUCLEOTIDE SEQUENCE [GENOMIC DNA]</scope>
</reference>
<name>O168_CONCL</name>
<comment type="subcellular location">
    <subcellularLocation>
        <location evidence="1">Secreted</location>
    </subcellularLocation>
</comment>
<comment type="tissue specificity">
    <text>Expressed by the venom duct.</text>
</comment>
<comment type="domain">
    <text evidence="1">The presence of a 'disulfide through disulfide knot' structurally defines this protein as a knottin.</text>
</comment>
<comment type="domain">
    <text>The cysteine framework is VI/VII (C-C-CC-C-C).</text>
</comment>
<comment type="similarity">
    <text evidence="3">Belongs to the conotoxin O1 superfamily.</text>
</comment>
<keyword id="KW-0027">Amidation</keyword>
<keyword id="KW-1015">Disulfide bond</keyword>
<keyword id="KW-0960">Knottin</keyword>
<keyword id="KW-0528">Neurotoxin</keyword>
<keyword id="KW-0964">Secreted</keyword>
<keyword id="KW-0732">Signal</keyword>
<keyword id="KW-0800">Toxin</keyword>
<sequence length="67" mass="7257">MKVTAVLMVAVLVLTACQLTTANTTDYVRRILARKSTMSKRYCSDSGGWCGLDPELCCNSSCFVLCG</sequence>
<evidence type="ECO:0000250" key="1"/>
<evidence type="ECO:0000255" key="2"/>
<evidence type="ECO:0000305" key="3"/>
<feature type="signal peptide" evidence="2">
    <location>
        <begin position="1"/>
        <end position="22"/>
    </location>
</feature>
<feature type="propeptide" id="PRO_0000414987" evidence="1">
    <location>
        <begin position="23"/>
        <end position="39"/>
    </location>
</feature>
<feature type="peptide" id="PRO_0000414988" description="Conotoxin Cl6.8">
    <location>
        <begin position="42"/>
        <end position="66"/>
    </location>
</feature>
<feature type="modified residue" description="Cysteine amide" evidence="1">
    <location>
        <position position="66"/>
    </location>
</feature>
<feature type="disulfide bond" evidence="1">
    <location>
        <begin position="43"/>
        <end position="58"/>
    </location>
</feature>
<feature type="disulfide bond" evidence="1">
    <location>
        <begin position="50"/>
        <end position="62"/>
    </location>
</feature>
<feature type="disulfide bond" evidence="1">
    <location>
        <begin position="57"/>
        <end position="66"/>
    </location>
</feature>